<reference key="1">
    <citation type="journal article" date="2008" name="J. Bacteriol.">
        <title>Genome sequence of a nephritogenic and highly transformable M49 strain of Streptococcus pyogenes.</title>
        <authorList>
            <person name="McShan W.M."/>
            <person name="Ferretti J.J."/>
            <person name="Karasawa T."/>
            <person name="Suvorov A.N."/>
            <person name="Lin S."/>
            <person name="Qin B."/>
            <person name="Jia H."/>
            <person name="Kenton S."/>
            <person name="Najar F."/>
            <person name="Wu H."/>
            <person name="Scott J."/>
            <person name="Roe B.A."/>
            <person name="Savic D.J."/>
        </authorList>
    </citation>
    <scope>NUCLEOTIDE SEQUENCE [LARGE SCALE GENOMIC DNA]</scope>
    <source>
        <strain>NZ131</strain>
    </source>
</reference>
<feature type="chain" id="PRO_1000126525" description="Small ribosomal subunit protein bS20">
    <location>
        <begin position="1"/>
        <end position="77"/>
    </location>
</feature>
<feature type="region of interest" description="Disordered" evidence="2">
    <location>
        <begin position="47"/>
        <end position="77"/>
    </location>
</feature>
<organism>
    <name type="scientific">Streptococcus pyogenes serotype M49 (strain NZ131)</name>
    <dbReference type="NCBI Taxonomy" id="471876"/>
    <lineage>
        <taxon>Bacteria</taxon>
        <taxon>Bacillati</taxon>
        <taxon>Bacillota</taxon>
        <taxon>Bacilli</taxon>
        <taxon>Lactobacillales</taxon>
        <taxon>Streptococcaceae</taxon>
        <taxon>Streptococcus</taxon>
    </lineage>
</organism>
<dbReference type="EMBL" id="CP000829">
    <property type="protein sequence ID" value="ACI61278.1"/>
    <property type="molecule type" value="Genomic_DNA"/>
</dbReference>
<dbReference type="SMR" id="B5XLR6"/>
<dbReference type="KEGG" id="soz:Spy49_0978"/>
<dbReference type="HOGENOM" id="CLU_160655_1_1_9"/>
<dbReference type="Proteomes" id="UP000001039">
    <property type="component" value="Chromosome"/>
</dbReference>
<dbReference type="GO" id="GO:0005829">
    <property type="term" value="C:cytosol"/>
    <property type="evidence" value="ECO:0007669"/>
    <property type="project" value="TreeGrafter"/>
</dbReference>
<dbReference type="GO" id="GO:0015935">
    <property type="term" value="C:small ribosomal subunit"/>
    <property type="evidence" value="ECO:0007669"/>
    <property type="project" value="TreeGrafter"/>
</dbReference>
<dbReference type="GO" id="GO:0070181">
    <property type="term" value="F:small ribosomal subunit rRNA binding"/>
    <property type="evidence" value="ECO:0007669"/>
    <property type="project" value="TreeGrafter"/>
</dbReference>
<dbReference type="GO" id="GO:0003735">
    <property type="term" value="F:structural constituent of ribosome"/>
    <property type="evidence" value="ECO:0007669"/>
    <property type="project" value="InterPro"/>
</dbReference>
<dbReference type="GO" id="GO:0006412">
    <property type="term" value="P:translation"/>
    <property type="evidence" value="ECO:0007669"/>
    <property type="project" value="UniProtKB-UniRule"/>
</dbReference>
<dbReference type="FunFam" id="1.20.58.110:FF:000001">
    <property type="entry name" value="30S ribosomal protein S20"/>
    <property type="match status" value="1"/>
</dbReference>
<dbReference type="Gene3D" id="1.20.58.110">
    <property type="entry name" value="Ribosomal protein S20"/>
    <property type="match status" value="1"/>
</dbReference>
<dbReference type="HAMAP" id="MF_00500">
    <property type="entry name" value="Ribosomal_bS20"/>
    <property type="match status" value="1"/>
</dbReference>
<dbReference type="InterPro" id="IPR002583">
    <property type="entry name" value="Ribosomal_bS20"/>
</dbReference>
<dbReference type="InterPro" id="IPR036510">
    <property type="entry name" value="Ribosomal_bS20_sf"/>
</dbReference>
<dbReference type="NCBIfam" id="TIGR00029">
    <property type="entry name" value="S20"/>
    <property type="match status" value="1"/>
</dbReference>
<dbReference type="PANTHER" id="PTHR33398">
    <property type="entry name" value="30S RIBOSOMAL PROTEIN S20"/>
    <property type="match status" value="1"/>
</dbReference>
<dbReference type="PANTHER" id="PTHR33398:SF1">
    <property type="entry name" value="SMALL RIBOSOMAL SUBUNIT PROTEIN BS20C"/>
    <property type="match status" value="1"/>
</dbReference>
<dbReference type="Pfam" id="PF01649">
    <property type="entry name" value="Ribosomal_S20p"/>
    <property type="match status" value="1"/>
</dbReference>
<dbReference type="SUPFAM" id="SSF46992">
    <property type="entry name" value="Ribosomal protein S20"/>
    <property type="match status" value="1"/>
</dbReference>
<gene>
    <name evidence="1" type="primary">rpsT</name>
    <name type="ordered locus">Spy49_0978</name>
</gene>
<accession>B5XLR6</accession>
<sequence>MANIKSAIKRAELNVKANEKNSAQKSAMRTAIKAFEANPSEELFRAASSSIDKAESKGLIHKNKASRDKARLAAKLG</sequence>
<protein>
    <recommendedName>
        <fullName evidence="1">Small ribosomal subunit protein bS20</fullName>
    </recommendedName>
    <alternativeName>
        <fullName evidence="3">30S ribosomal protein S20</fullName>
    </alternativeName>
</protein>
<proteinExistence type="inferred from homology"/>
<name>RS20_STRPZ</name>
<evidence type="ECO:0000255" key="1">
    <source>
        <dbReference type="HAMAP-Rule" id="MF_00500"/>
    </source>
</evidence>
<evidence type="ECO:0000256" key="2">
    <source>
        <dbReference type="SAM" id="MobiDB-lite"/>
    </source>
</evidence>
<evidence type="ECO:0000305" key="3"/>
<comment type="function">
    <text evidence="1">Binds directly to 16S ribosomal RNA.</text>
</comment>
<comment type="similarity">
    <text evidence="1">Belongs to the bacterial ribosomal protein bS20 family.</text>
</comment>
<keyword id="KW-0687">Ribonucleoprotein</keyword>
<keyword id="KW-0689">Ribosomal protein</keyword>
<keyword id="KW-0694">RNA-binding</keyword>
<keyword id="KW-0699">rRNA-binding</keyword>